<organism>
    <name type="scientific">Danio rerio</name>
    <name type="common">Zebrafish</name>
    <name type="synonym">Brachydanio rerio</name>
    <dbReference type="NCBI Taxonomy" id="7955"/>
    <lineage>
        <taxon>Eukaryota</taxon>
        <taxon>Metazoa</taxon>
        <taxon>Chordata</taxon>
        <taxon>Craniata</taxon>
        <taxon>Vertebrata</taxon>
        <taxon>Euteleostomi</taxon>
        <taxon>Actinopterygii</taxon>
        <taxon>Neopterygii</taxon>
        <taxon>Teleostei</taxon>
        <taxon>Ostariophysi</taxon>
        <taxon>Cypriniformes</taxon>
        <taxon>Danionidae</taxon>
        <taxon>Danioninae</taxon>
        <taxon>Danio</taxon>
    </lineage>
</organism>
<reference key="1">
    <citation type="submission" date="2006-03" db="EMBL/GenBank/DDBJ databases">
        <authorList>
            <consortium name="NIH - Zebrafish Gene Collection (ZGC) project"/>
        </authorList>
    </citation>
    <scope>NUCLEOTIDE SEQUENCE [LARGE SCALE MRNA]</scope>
</reference>
<protein>
    <recommendedName>
        <fullName>Dual specificity phosphatase 29</fullName>
    </recommendedName>
    <alternativeName>
        <fullName>Dual specificity phosphatase DUPD1</fullName>
        <ecNumber evidence="1">3.1.3.16</ecNumber>
        <ecNumber evidence="1">3.1.3.48</ecNumber>
    </alternativeName>
</protein>
<comment type="function">
    <text evidence="1 2">Dual specificity phosphatase able to dephosphorylate phosphotyrosine, phosphoserine and phosphothreonine residues within the same substrate, with a preference for phosphotyrosine as a substrate (By similarity). Involved in the modulation of AMPK and MAPK1/2 signaling pathways (By similarity).</text>
</comment>
<comment type="catalytic activity">
    <reaction evidence="1">
        <text>O-phospho-L-tyrosyl-[protein] + H2O = L-tyrosyl-[protein] + phosphate</text>
        <dbReference type="Rhea" id="RHEA:10684"/>
        <dbReference type="Rhea" id="RHEA-COMP:10136"/>
        <dbReference type="Rhea" id="RHEA-COMP:20101"/>
        <dbReference type="ChEBI" id="CHEBI:15377"/>
        <dbReference type="ChEBI" id="CHEBI:43474"/>
        <dbReference type="ChEBI" id="CHEBI:46858"/>
        <dbReference type="ChEBI" id="CHEBI:61978"/>
        <dbReference type="EC" id="3.1.3.48"/>
    </reaction>
</comment>
<comment type="catalytic activity">
    <reaction evidence="1">
        <text>O-phospho-L-seryl-[protein] + H2O = L-seryl-[protein] + phosphate</text>
        <dbReference type="Rhea" id="RHEA:20629"/>
        <dbReference type="Rhea" id="RHEA-COMP:9863"/>
        <dbReference type="Rhea" id="RHEA-COMP:11604"/>
        <dbReference type="ChEBI" id="CHEBI:15377"/>
        <dbReference type="ChEBI" id="CHEBI:29999"/>
        <dbReference type="ChEBI" id="CHEBI:43474"/>
        <dbReference type="ChEBI" id="CHEBI:83421"/>
        <dbReference type="EC" id="3.1.3.16"/>
    </reaction>
</comment>
<comment type="catalytic activity">
    <reaction evidence="1">
        <text>O-phospho-L-threonyl-[protein] + H2O = L-threonyl-[protein] + phosphate</text>
        <dbReference type="Rhea" id="RHEA:47004"/>
        <dbReference type="Rhea" id="RHEA-COMP:11060"/>
        <dbReference type="Rhea" id="RHEA-COMP:11605"/>
        <dbReference type="ChEBI" id="CHEBI:15377"/>
        <dbReference type="ChEBI" id="CHEBI:30013"/>
        <dbReference type="ChEBI" id="CHEBI:43474"/>
        <dbReference type="ChEBI" id="CHEBI:61977"/>
        <dbReference type="EC" id="3.1.3.16"/>
    </reaction>
</comment>
<comment type="subcellular location">
    <subcellularLocation>
        <location evidence="1">Cytoplasm</location>
    </subcellularLocation>
    <subcellularLocation>
        <location evidence="2">Nucleus</location>
    </subcellularLocation>
</comment>
<comment type="similarity">
    <text evidence="4">Belongs to the protein-tyrosine phosphatase family. Non-receptor class dual specificity subfamily.</text>
</comment>
<gene>
    <name type="primary">dusp29</name>
    <name type="synonym">dupd1</name>
    <name type="ORF">zgc:136906</name>
</gene>
<evidence type="ECO:0000250" key="1">
    <source>
        <dbReference type="UniProtKB" id="Q68J44"/>
    </source>
</evidence>
<evidence type="ECO:0000250" key="2">
    <source>
        <dbReference type="UniProtKB" id="Q8BK84"/>
    </source>
</evidence>
<evidence type="ECO:0000255" key="3">
    <source>
        <dbReference type="PROSITE-ProRule" id="PRU00160"/>
    </source>
</evidence>
<evidence type="ECO:0000305" key="4"/>
<dbReference type="EC" id="3.1.3.16" evidence="1"/>
<dbReference type="EC" id="3.1.3.48" evidence="1"/>
<dbReference type="EMBL" id="BC114305">
    <property type="protein sequence ID" value="AAI14306.1"/>
    <property type="molecule type" value="mRNA"/>
</dbReference>
<dbReference type="RefSeq" id="NP_001034926.1">
    <property type="nucleotide sequence ID" value="NM_001039837.1"/>
</dbReference>
<dbReference type="SMR" id="Q29RA3"/>
<dbReference type="FunCoup" id="Q29RA3">
    <property type="interactions" value="140"/>
</dbReference>
<dbReference type="STRING" id="7955.ENSDARP00000130700"/>
<dbReference type="PaxDb" id="7955-ENSDARP00000089351"/>
<dbReference type="GeneID" id="664697"/>
<dbReference type="KEGG" id="dre:664697"/>
<dbReference type="AGR" id="ZFIN:ZDB-GENE-060312-23"/>
<dbReference type="CTD" id="338599"/>
<dbReference type="ZFIN" id="ZDB-GENE-060312-23">
    <property type="gene designation" value="dusp29"/>
</dbReference>
<dbReference type="eggNOG" id="KOG1716">
    <property type="taxonomic scope" value="Eukaryota"/>
</dbReference>
<dbReference type="InParanoid" id="Q29RA3"/>
<dbReference type="OrthoDB" id="10252009at2759"/>
<dbReference type="PhylomeDB" id="Q29RA3"/>
<dbReference type="PRO" id="PR:Q29RA3"/>
<dbReference type="Proteomes" id="UP000000437">
    <property type="component" value="Unplaced"/>
</dbReference>
<dbReference type="GO" id="GO:0005737">
    <property type="term" value="C:cytoplasm"/>
    <property type="evidence" value="ECO:0000250"/>
    <property type="project" value="UniProtKB"/>
</dbReference>
<dbReference type="GO" id="GO:0005634">
    <property type="term" value="C:nucleus"/>
    <property type="evidence" value="ECO:0000250"/>
    <property type="project" value="UniProtKB"/>
</dbReference>
<dbReference type="GO" id="GO:0033549">
    <property type="term" value="F:MAP kinase phosphatase activity"/>
    <property type="evidence" value="ECO:0000318"/>
    <property type="project" value="GO_Central"/>
</dbReference>
<dbReference type="GO" id="GO:0004722">
    <property type="term" value="F:protein serine/threonine phosphatase activity"/>
    <property type="evidence" value="ECO:0007669"/>
    <property type="project" value="UniProtKB-EC"/>
</dbReference>
<dbReference type="GO" id="GO:0004725">
    <property type="term" value="F:protein tyrosine phosphatase activity"/>
    <property type="evidence" value="ECO:0007669"/>
    <property type="project" value="UniProtKB-EC"/>
</dbReference>
<dbReference type="GO" id="GO:0008138">
    <property type="term" value="F:protein tyrosine/serine/threonine phosphatase activity"/>
    <property type="evidence" value="ECO:0000250"/>
    <property type="project" value="UniProtKB"/>
</dbReference>
<dbReference type="GO" id="GO:0043409">
    <property type="term" value="P:negative regulation of MAPK cascade"/>
    <property type="evidence" value="ECO:0000318"/>
    <property type="project" value="GO_Central"/>
</dbReference>
<dbReference type="GO" id="GO:0006470">
    <property type="term" value="P:protein dephosphorylation"/>
    <property type="evidence" value="ECO:0000250"/>
    <property type="project" value="UniProtKB"/>
</dbReference>
<dbReference type="CDD" id="cd14575">
    <property type="entry name" value="DUPD1"/>
    <property type="match status" value="1"/>
</dbReference>
<dbReference type="FunFam" id="3.90.190.10:FF:000037">
    <property type="entry name" value="dual specificity protein phosphatase 26"/>
    <property type="match status" value="1"/>
</dbReference>
<dbReference type="Gene3D" id="3.90.190.10">
    <property type="entry name" value="Protein tyrosine phosphatase superfamily"/>
    <property type="match status" value="1"/>
</dbReference>
<dbReference type="InterPro" id="IPR020405">
    <property type="entry name" value="Atypical_DUSP_subfamA"/>
</dbReference>
<dbReference type="InterPro" id="IPR000340">
    <property type="entry name" value="Dual-sp_phosphatase_cat-dom"/>
</dbReference>
<dbReference type="InterPro" id="IPR029021">
    <property type="entry name" value="Prot-tyrosine_phosphatase-like"/>
</dbReference>
<dbReference type="InterPro" id="IPR016130">
    <property type="entry name" value="Tyr_Pase_AS"/>
</dbReference>
<dbReference type="InterPro" id="IPR000387">
    <property type="entry name" value="Tyr_Pase_dom"/>
</dbReference>
<dbReference type="InterPro" id="IPR020422">
    <property type="entry name" value="TYR_PHOSPHATASE_DUAL_dom"/>
</dbReference>
<dbReference type="PANTHER" id="PTHR45682">
    <property type="entry name" value="AGAP008228-PA"/>
    <property type="match status" value="1"/>
</dbReference>
<dbReference type="PANTHER" id="PTHR45682:SF6">
    <property type="entry name" value="DUAL SPECIFICITY PHOSPHATASE 29"/>
    <property type="match status" value="1"/>
</dbReference>
<dbReference type="Pfam" id="PF00782">
    <property type="entry name" value="DSPc"/>
    <property type="match status" value="1"/>
</dbReference>
<dbReference type="PRINTS" id="PR01908">
    <property type="entry name" value="ADSPHPHTASE"/>
</dbReference>
<dbReference type="PRINTS" id="PR01909">
    <property type="entry name" value="ADSPHPHTASEA"/>
</dbReference>
<dbReference type="SMART" id="SM00195">
    <property type="entry name" value="DSPc"/>
    <property type="match status" value="1"/>
</dbReference>
<dbReference type="SUPFAM" id="SSF52799">
    <property type="entry name" value="(Phosphotyrosine protein) phosphatases II"/>
    <property type="match status" value="1"/>
</dbReference>
<dbReference type="PROSITE" id="PS00383">
    <property type="entry name" value="TYR_PHOSPHATASE_1"/>
    <property type="match status" value="1"/>
</dbReference>
<dbReference type="PROSITE" id="PS50056">
    <property type="entry name" value="TYR_PHOSPHATASE_2"/>
    <property type="match status" value="1"/>
</dbReference>
<dbReference type="PROSITE" id="PS50054">
    <property type="entry name" value="TYR_PHOSPHATASE_DUAL"/>
    <property type="match status" value="1"/>
</dbReference>
<accession>Q29RA3</accession>
<sequence>MSSAQAEDEQDYETPSCYELQKHFTHGGVAYTHVNEVWPGVYIGNEETARDRYKLQTLGITHILNAAEGEWNSVDTGAEYYKDMQIHYYGVTAEDTPTFNISQYFYSAAEYIQQTLSDPHNKLLLHCVMGRSRSATLFLAFLMLQQRMSLLQAVEQLAHRRHICPNWGFLKQLRELDTHLQEERRRTHT</sequence>
<proteinExistence type="evidence at transcript level"/>
<keyword id="KW-0963">Cytoplasm</keyword>
<keyword id="KW-0378">Hydrolase</keyword>
<keyword id="KW-0539">Nucleus</keyword>
<keyword id="KW-0904">Protein phosphatase</keyword>
<keyword id="KW-1185">Reference proteome</keyword>
<feature type="chain" id="PRO_0000295885" description="Dual specificity phosphatase 29">
    <location>
        <begin position="1"/>
        <end position="189"/>
    </location>
</feature>
<feature type="domain" description="Tyrosine-protein phosphatase" evidence="3">
    <location>
        <begin position="33"/>
        <end position="182"/>
    </location>
</feature>
<feature type="active site" description="Phosphocysteine intermediate" evidence="3">
    <location>
        <position position="127"/>
    </location>
</feature>
<feature type="binding site" evidence="1">
    <location>
        <begin position="126"/>
        <end position="133"/>
    </location>
    <ligand>
        <name>substrate</name>
    </ligand>
</feature>
<name>DUS29_DANRE</name>